<name>PAP1_ORFN2</name>
<organismHost>
    <name type="scientific">Capra hircus</name>
    <name type="common">Goat</name>
    <dbReference type="NCBI Taxonomy" id="9925"/>
</organismHost>
<organismHost>
    <name type="scientific">Homo sapiens</name>
    <name type="common">Human</name>
    <dbReference type="NCBI Taxonomy" id="9606"/>
</organismHost>
<organismHost>
    <name type="scientific">Ovis aries</name>
    <name type="common">Sheep</name>
    <dbReference type="NCBI Taxonomy" id="9940"/>
</organismHost>
<proteinExistence type="inferred from homology"/>
<feature type="chain" id="PRO_0000308937" description="Poly(A) polymerase catalytic subunit">
    <location>
        <begin position="1"/>
        <end position="472"/>
    </location>
</feature>
<feature type="active site" evidence="1">
    <location>
        <position position="191"/>
    </location>
</feature>
<feature type="active site" evidence="1">
    <location>
        <position position="193"/>
    </location>
</feature>
<dbReference type="EC" id="2.7.7.19"/>
<dbReference type="EMBL" id="DQ184476">
    <property type="protein sequence ID" value="ABA00535.1"/>
    <property type="molecule type" value="Genomic_DNA"/>
</dbReference>
<dbReference type="SMR" id="Q2F8F7"/>
<dbReference type="Proteomes" id="UP000134705">
    <property type="component" value="Segment"/>
</dbReference>
<dbReference type="GO" id="GO:0005524">
    <property type="term" value="F:ATP binding"/>
    <property type="evidence" value="ECO:0007669"/>
    <property type="project" value="UniProtKB-KW"/>
</dbReference>
<dbReference type="GO" id="GO:1990817">
    <property type="term" value="F:poly(A) RNA polymerase activity"/>
    <property type="evidence" value="ECO:0007669"/>
    <property type="project" value="UniProtKB-EC"/>
</dbReference>
<dbReference type="GO" id="GO:0006397">
    <property type="term" value="P:mRNA processing"/>
    <property type="evidence" value="ECO:0007669"/>
    <property type="project" value="UniProtKB-KW"/>
</dbReference>
<dbReference type="CDD" id="cd20919">
    <property type="entry name" value="polyA_pol_Pox"/>
    <property type="match status" value="1"/>
</dbReference>
<dbReference type="Gene3D" id="1.20.1270.320">
    <property type="entry name" value="Poxvirus poly(A) polymerase, N domain"/>
    <property type="match status" value="1"/>
</dbReference>
<dbReference type="Gene3D" id="3.30.460.60">
    <property type="entry name" value="Poxvirus poly(A) polymerase, nucleotidyltransferase domain"/>
    <property type="match status" value="1"/>
</dbReference>
<dbReference type="InterPro" id="IPR004976">
    <property type="entry name" value="PolyA_pol_cat_Poxvir"/>
</dbReference>
<dbReference type="InterPro" id="IPR037265">
    <property type="entry name" value="PolyA_pol_cat_sf"/>
</dbReference>
<dbReference type="InterPro" id="IPR024231">
    <property type="entry name" value="PolyA_pol_nucTrfase_Poxvir"/>
</dbReference>
<dbReference type="InterPro" id="IPR038419">
    <property type="entry name" value="PolyA_pol_nucTrfase_sf_Poxvir"/>
</dbReference>
<dbReference type="InterPro" id="IPR024397">
    <property type="entry name" value="Poxvirus_polyA_pol_cat_C"/>
</dbReference>
<dbReference type="InterPro" id="IPR024398">
    <property type="entry name" value="Poxvirus_polyA_pol_cat_N"/>
</dbReference>
<dbReference type="InterPro" id="IPR038337">
    <property type="entry name" value="Poxvirus_polyA_pol_cat_N_sf"/>
</dbReference>
<dbReference type="Pfam" id="PF03296">
    <property type="entry name" value="Pox_polyA_pol"/>
    <property type="match status" value="1"/>
</dbReference>
<dbReference type="Pfam" id="PF12629">
    <property type="entry name" value="Pox_polyA_pol_C"/>
    <property type="match status" value="1"/>
</dbReference>
<dbReference type="Pfam" id="PF12630">
    <property type="entry name" value="Pox_polyA_pol_N"/>
    <property type="match status" value="1"/>
</dbReference>
<dbReference type="PIRSF" id="PIRSF015693">
    <property type="entry name" value="VAC-48L_nuct"/>
    <property type="match status" value="1"/>
</dbReference>
<dbReference type="SUPFAM" id="SSF160957">
    <property type="entry name" value="Poly(A) polymerase catalytic subunit-like"/>
    <property type="match status" value="1"/>
</dbReference>
<protein>
    <recommendedName>
        <fullName>Poly(A) polymerase catalytic subunit</fullName>
        <ecNumber>2.7.7.19</ecNumber>
    </recommendedName>
    <alternativeName>
        <fullName>Poly(A) polymerase large subunit</fullName>
        <shortName>PAP-L</shortName>
    </alternativeName>
</protein>
<accession>Q2F8F7</accession>
<keyword id="KW-0067">ATP-binding</keyword>
<keyword id="KW-0507">mRNA processing</keyword>
<keyword id="KW-0547">Nucleotide-binding</keyword>
<keyword id="KW-0804">Transcription</keyword>
<keyword id="KW-0808">Transferase</keyword>
<organism>
    <name type="scientific">Orf virus (strain NZ2)</name>
    <name type="common">OV NZ-2</name>
    <dbReference type="NCBI Taxonomy" id="10259"/>
    <lineage>
        <taxon>Viruses</taxon>
        <taxon>Varidnaviria</taxon>
        <taxon>Bamfordvirae</taxon>
        <taxon>Nucleocytoviricota</taxon>
        <taxon>Pokkesviricetes</taxon>
        <taxon>Chitovirales</taxon>
        <taxon>Poxviridae</taxon>
        <taxon>Chordopoxvirinae</taxon>
        <taxon>Parapoxvirus</taxon>
        <taxon>Orf virus</taxon>
    </lineage>
</organism>
<evidence type="ECO:0000250" key="1"/>
<evidence type="ECO:0000305" key="2"/>
<comment type="function">
    <text>Polymerase that creates the 3'-poly(A) tail of mRNA's.</text>
</comment>
<comment type="catalytic activity">
    <reaction>
        <text>RNA(n) + ATP = RNA(n)-3'-adenine ribonucleotide + diphosphate</text>
        <dbReference type="Rhea" id="RHEA:11332"/>
        <dbReference type="Rhea" id="RHEA-COMP:14527"/>
        <dbReference type="Rhea" id="RHEA-COMP:17347"/>
        <dbReference type="ChEBI" id="CHEBI:30616"/>
        <dbReference type="ChEBI" id="CHEBI:33019"/>
        <dbReference type="ChEBI" id="CHEBI:140395"/>
        <dbReference type="ChEBI" id="CHEBI:173115"/>
        <dbReference type="EC" id="2.7.7.19"/>
    </reaction>
</comment>
<comment type="subunit">
    <text evidence="1">Heterodimer of a large (catalytic) subunit and a small (regulatory) subunit.</text>
</comment>
<comment type="similarity">
    <text evidence="2">Belongs to the poxviridae poly(A) polymerase catalytic subunit family.</text>
</comment>
<gene>
    <name type="primary">PAPL</name>
</gene>
<sequence>MAPPVIEEYLGSRPSMERCVLLRAQRRNMTRVLNFDRKLFLSLVVKSRRRFFKKLGGSEKEIAARIEEYFSRQRRLEKLGQILTVLELQSVIVSEFTRTLGSLTTPTPAINAAVRRVDAPRARALASRALNSYAVLPPPEEAAPMARHKHSDLVEVVKRLVKEHLRRHNKRCVCYGSYALHLLNPEIEYGDIDMVQTNARPFLINLAFLIYFVTGRQTVLLRVPYLKNYVVLQDEEGGHILDSFNVRQATLRALPTLLVDNIYVLHPFVQLMAMLKMFSQTDRIRDLADNFDKARARMETLLAFALEELGEAPADGRTPLPCAFLPPEGGASRVLEADARALDCGFARAVVFLDEPALVQTLLDMGVQDDEIVDFESVSNSAFLVRDNTLFTYFSNTVLMDGDAVHDLSRRGVSAHIVMFLLLTRHPAAEGAVRSMLGSLVSDARPVTSVVERERKTGTHGVIDIAKNVITH</sequence>
<reference key="1">
    <citation type="journal article" date="2006" name="Virus Res.">
        <title>Comparative analysis of genome sequences of three isolates of Orf virus reveals unexpected sequence variation.</title>
        <authorList>
            <person name="Mercer A.A."/>
            <person name="Ueda N."/>
            <person name="Friederichs S.M."/>
            <person name="Hofmann K."/>
            <person name="Fraser K.M."/>
            <person name="Bateman T."/>
            <person name="Fleming S.B."/>
        </authorList>
    </citation>
    <scope>NUCLEOTIDE SEQUENCE [LARGE SCALE GENOMIC DNA]</scope>
</reference>